<comment type="function">
    <text evidence="1">Catalyzes the reversible isomerization of glucose-6-phosphate to fructose-6-phosphate.</text>
</comment>
<comment type="catalytic activity">
    <reaction evidence="1">
        <text>alpha-D-glucose 6-phosphate = beta-D-fructose 6-phosphate</text>
        <dbReference type="Rhea" id="RHEA:11816"/>
        <dbReference type="ChEBI" id="CHEBI:57634"/>
        <dbReference type="ChEBI" id="CHEBI:58225"/>
        <dbReference type="EC" id="5.3.1.9"/>
    </reaction>
</comment>
<comment type="pathway">
    <text evidence="1">Carbohydrate biosynthesis; gluconeogenesis.</text>
</comment>
<comment type="pathway">
    <text evidence="1">Carbohydrate degradation; glycolysis; D-glyceraldehyde 3-phosphate and glycerone phosphate from D-glucose: step 2/4.</text>
</comment>
<comment type="subcellular location">
    <subcellularLocation>
        <location evidence="1">Cytoplasm</location>
    </subcellularLocation>
</comment>
<comment type="similarity">
    <text evidence="1">Belongs to the GPI family.</text>
</comment>
<keyword id="KW-0963">Cytoplasm</keyword>
<keyword id="KW-0312">Gluconeogenesis</keyword>
<keyword id="KW-0324">Glycolysis</keyword>
<keyword id="KW-0413">Isomerase</keyword>
<keyword id="KW-1185">Reference proteome</keyword>
<feature type="chain" id="PRO_0000180684" description="Glucose-6-phosphate isomerase">
    <location>
        <begin position="1"/>
        <end position="427"/>
    </location>
</feature>
<feature type="active site" description="Proton donor" evidence="1">
    <location>
        <position position="277"/>
    </location>
</feature>
<feature type="active site" evidence="1">
    <location>
        <position position="298"/>
    </location>
</feature>
<feature type="active site" evidence="1">
    <location>
        <position position="414"/>
    </location>
</feature>
<evidence type="ECO:0000255" key="1">
    <source>
        <dbReference type="HAMAP-Rule" id="MF_00473"/>
    </source>
</evidence>
<reference key="1">
    <citation type="journal article" date="2004" name="Genome Res.">
        <title>The genome sequence of Mycoplasma mycoides subsp. mycoides SC type strain PG1T, the causative agent of contagious bovine pleuropneumonia (CBPP).</title>
        <authorList>
            <person name="Westberg J."/>
            <person name="Persson A."/>
            <person name="Holmberg A."/>
            <person name="Goesmann A."/>
            <person name="Lundeberg J."/>
            <person name="Johansson K.-E."/>
            <person name="Pettersson B."/>
            <person name="Uhlen M."/>
        </authorList>
    </citation>
    <scope>NUCLEOTIDE SEQUENCE [LARGE SCALE GENOMIC DNA]</scope>
    <source>
        <strain>CCUG 32753 / NCTC 10114 / PG1</strain>
    </source>
</reference>
<name>G6PI_MYCMS</name>
<accession>Q6MTA3</accession>
<protein>
    <recommendedName>
        <fullName evidence="1">Glucose-6-phosphate isomerase</fullName>
        <shortName evidence="1">GPI</shortName>
        <ecNumber evidence="1">5.3.1.9</ecNumber>
    </recommendedName>
    <alternativeName>
        <fullName evidence="1">Phosphoglucose isomerase</fullName>
        <shortName evidence="1">PGI</shortName>
    </alternativeName>
    <alternativeName>
        <fullName evidence="1">Phosphohexose isomerase</fullName>
        <shortName evidence="1">PHI</shortName>
    </alternativeName>
</protein>
<proteinExistence type="inferred from homology"/>
<gene>
    <name evidence="1" type="primary">pgi</name>
    <name type="ordered locus">MSC_0505</name>
</gene>
<dbReference type="EC" id="5.3.1.9" evidence="1"/>
<dbReference type="EMBL" id="BX293980">
    <property type="protein sequence ID" value="CAE77133.1"/>
    <property type="molecule type" value="Genomic_DNA"/>
</dbReference>
<dbReference type="RefSeq" id="NP_975491.1">
    <property type="nucleotide sequence ID" value="NC_005364.2"/>
</dbReference>
<dbReference type="RefSeq" id="WP_011166689.1">
    <property type="nucleotide sequence ID" value="NC_005364.2"/>
</dbReference>
<dbReference type="SMR" id="Q6MTA3"/>
<dbReference type="STRING" id="272632.MSC_0505"/>
<dbReference type="KEGG" id="mmy:MSC_0505"/>
<dbReference type="PATRIC" id="fig|272632.4.peg.545"/>
<dbReference type="eggNOG" id="COG0166">
    <property type="taxonomic scope" value="Bacteria"/>
</dbReference>
<dbReference type="HOGENOM" id="CLU_037303_0_1_14"/>
<dbReference type="UniPathway" id="UPA00109">
    <property type="reaction ID" value="UER00181"/>
</dbReference>
<dbReference type="UniPathway" id="UPA00138"/>
<dbReference type="Proteomes" id="UP000001016">
    <property type="component" value="Chromosome"/>
</dbReference>
<dbReference type="GO" id="GO:0005829">
    <property type="term" value="C:cytosol"/>
    <property type="evidence" value="ECO:0007669"/>
    <property type="project" value="TreeGrafter"/>
</dbReference>
<dbReference type="GO" id="GO:0097367">
    <property type="term" value="F:carbohydrate derivative binding"/>
    <property type="evidence" value="ECO:0007669"/>
    <property type="project" value="InterPro"/>
</dbReference>
<dbReference type="GO" id="GO:0004347">
    <property type="term" value="F:glucose-6-phosphate isomerase activity"/>
    <property type="evidence" value="ECO:0007669"/>
    <property type="project" value="UniProtKB-UniRule"/>
</dbReference>
<dbReference type="GO" id="GO:0048029">
    <property type="term" value="F:monosaccharide binding"/>
    <property type="evidence" value="ECO:0007669"/>
    <property type="project" value="TreeGrafter"/>
</dbReference>
<dbReference type="GO" id="GO:0006094">
    <property type="term" value="P:gluconeogenesis"/>
    <property type="evidence" value="ECO:0007669"/>
    <property type="project" value="UniProtKB-UniRule"/>
</dbReference>
<dbReference type="GO" id="GO:0051156">
    <property type="term" value="P:glucose 6-phosphate metabolic process"/>
    <property type="evidence" value="ECO:0007669"/>
    <property type="project" value="TreeGrafter"/>
</dbReference>
<dbReference type="GO" id="GO:0006096">
    <property type="term" value="P:glycolytic process"/>
    <property type="evidence" value="ECO:0007669"/>
    <property type="project" value="UniProtKB-UniRule"/>
</dbReference>
<dbReference type="CDD" id="cd05015">
    <property type="entry name" value="SIS_PGI_1"/>
    <property type="match status" value="1"/>
</dbReference>
<dbReference type="CDD" id="cd05016">
    <property type="entry name" value="SIS_PGI_2"/>
    <property type="match status" value="1"/>
</dbReference>
<dbReference type="FunFam" id="3.40.50.10490:FF:000016">
    <property type="entry name" value="Glucose-6-phosphate isomerase"/>
    <property type="match status" value="1"/>
</dbReference>
<dbReference type="Gene3D" id="3.40.50.10490">
    <property type="entry name" value="Glucose-6-phosphate isomerase like protein, domain 1"/>
    <property type="match status" value="2"/>
</dbReference>
<dbReference type="HAMAP" id="MF_00473">
    <property type="entry name" value="G6P_isomerase"/>
    <property type="match status" value="1"/>
</dbReference>
<dbReference type="InterPro" id="IPR001672">
    <property type="entry name" value="G6P_Isomerase"/>
</dbReference>
<dbReference type="InterPro" id="IPR018189">
    <property type="entry name" value="Phosphoglucose_isomerase_CS"/>
</dbReference>
<dbReference type="InterPro" id="IPR046348">
    <property type="entry name" value="SIS_dom_sf"/>
</dbReference>
<dbReference type="InterPro" id="IPR035476">
    <property type="entry name" value="SIS_PGI_1"/>
</dbReference>
<dbReference type="InterPro" id="IPR035482">
    <property type="entry name" value="SIS_PGI_2"/>
</dbReference>
<dbReference type="NCBIfam" id="NF010697">
    <property type="entry name" value="PRK14097.1"/>
    <property type="match status" value="1"/>
</dbReference>
<dbReference type="PANTHER" id="PTHR11469">
    <property type="entry name" value="GLUCOSE-6-PHOSPHATE ISOMERASE"/>
    <property type="match status" value="1"/>
</dbReference>
<dbReference type="PANTHER" id="PTHR11469:SF1">
    <property type="entry name" value="GLUCOSE-6-PHOSPHATE ISOMERASE"/>
    <property type="match status" value="1"/>
</dbReference>
<dbReference type="Pfam" id="PF00342">
    <property type="entry name" value="PGI"/>
    <property type="match status" value="1"/>
</dbReference>
<dbReference type="PRINTS" id="PR00662">
    <property type="entry name" value="G6PISOMERASE"/>
</dbReference>
<dbReference type="SUPFAM" id="SSF53697">
    <property type="entry name" value="SIS domain"/>
    <property type="match status" value="1"/>
</dbReference>
<dbReference type="PROSITE" id="PS00765">
    <property type="entry name" value="P_GLUCOSE_ISOMERASE_1"/>
    <property type="match status" value="1"/>
</dbReference>
<dbReference type="PROSITE" id="PS00174">
    <property type="entry name" value="P_GLUCOSE_ISOMERASE_2"/>
    <property type="match status" value="1"/>
</dbReference>
<dbReference type="PROSITE" id="PS51463">
    <property type="entry name" value="P_GLUCOSE_ISOMERASE_3"/>
    <property type="match status" value="1"/>
</dbReference>
<organism>
    <name type="scientific">Mycoplasma mycoides subsp. mycoides SC (strain CCUG 32753 / NCTC 10114 / PG1)</name>
    <dbReference type="NCBI Taxonomy" id="272632"/>
    <lineage>
        <taxon>Bacteria</taxon>
        <taxon>Bacillati</taxon>
        <taxon>Mycoplasmatota</taxon>
        <taxon>Mollicutes</taxon>
        <taxon>Mycoplasmataceae</taxon>
        <taxon>Mycoplasma</taxon>
    </lineage>
</organism>
<sequence>MIKVNLDHTNIDINKVVDLNKVKQIHQMIINKTGKGNDYLGWLNWPNDYNKTEYEQMKQVANKLRSEIEVLVVIGIGGSYLGCRAADEMIRGLYHQDKVELIYAGNTMSSTYIYQLVEYLKNKNFGICVISKSGTTTEPGISFRVFEKLLVDKVGLNKAKDLIVAITDKNKGALKQLADKKGYQTFVIPNDIGGRFSVLTPVGIFPLLVSGINTDNIFNGALKAKNELINDDLSNQAYKYAVIRNYLYNQGYKTDALISYELQLQMLTEWWKQLFGESEGKDNKGLLPSSMIFSTDLHSLGQWVQEGPRNVMFETIIKIEKPNYDLNVPIDEDNYDGLNYLTKNSFHQINQTALKGAIQAHSVTGNMPNIVLEFEKMDDEQFGYLVYFFELALTMSAYLLDVNPFNQPGVEVYKYNMFKLLNKPGIK</sequence>